<proteinExistence type="inferred from homology"/>
<dbReference type="EC" id="2.1.1.-" evidence="1"/>
<dbReference type="EMBL" id="CP001056">
    <property type="protein sequence ID" value="ACD22689.1"/>
    <property type="molecule type" value="Genomic_DNA"/>
</dbReference>
<dbReference type="SMR" id="B2TRH8"/>
<dbReference type="KEGG" id="cbk:CLL_A3598"/>
<dbReference type="PATRIC" id="fig|935198.13.peg.3520"/>
<dbReference type="HOGENOM" id="CLU_065341_0_0_9"/>
<dbReference type="Proteomes" id="UP000001195">
    <property type="component" value="Chromosome"/>
</dbReference>
<dbReference type="GO" id="GO:0005829">
    <property type="term" value="C:cytosol"/>
    <property type="evidence" value="ECO:0007669"/>
    <property type="project" value="TreeGrafter"/>
</dbReference>
<dbReference type="GO" id="GO:0070043">
    <property type="term" value="F:rRNA (guanine-N7-)-methyltransferase activity"/>
    <property type="evidence" value="ECO:0007669"/>
    <property type="project" value="UniProtKB-UniRule"/>
</dbReference>
<dbReference type="CDD" id="cd02440">
    <property type="entry name" value="AdoMet_MTases"/>
    <property type="match status" value="1"/>
</dbReference>
<dbReference type="FunFam" id="3.40.50.150:FF:000041">
    <property type="entry name" value="Ribosomal RNA small subunit methyltransferase G"/>
    <property type="match status" value="1"/>
</dbReference>
<dbReference type="Gene3D" id="3.40.50.150">
    <property type="entry name" value="Vaccinia Virus protein VP39"/>
    <property type="match status" value="1"/>
</dbReference>
<dbReference type="HAMAP" id="MF_00074">
    <property type="entry name" value="16SrRNA_methyltr_G"/>
    <property type="match status" value="1"/>
</dbReference>
<dbReference type="InterPro" id="IPR003682">
    <property type="entry name" value="rRNA_ssu_MeTfrase_G"/>
</dbReference>
<dbReference type="InterPro" id="IPR029063">
    <property type="entry name" value="SAM-dependent_MTases_sf"/>
</dbReference>
<dbReference type="NCBIfam" id="TIGR00138">
    <property type="entry name" value="rsmG_gidB"/>
    <property type="match status" value="1"/>
</dbReference>
<dbReference type="PANTHER" id="PTHR31760">
    <property type="entry name" value="S-ADENOSYL-L-METHIONINE-DEPENDENT METHYLTRANSFERASES SUPERFAMILY PROTEIN"/>
    <property type="match status" value="1"/>
</dbReference>
<dbReference type="PANTHER" id="PTHR31760:SF0">
    <property type="entry name" value="S-ADENOSYL-L-METHIONINE-DEPENDENT METHYLTRANSFERASES SUPERFAMILY PROTEIN"/>
    <property type="match status" value="1"/>
</dbReference>
<dbReference type="Pfam" id="PF02527">
    <property type="entry name" value="GidB"/>
    <property type="match status" value="1"/>
</dbReference>
<dbReference type="PIRSF" id="PIRSF003078">
    <property type="entry name" value="GidB"/>
    <property type="match status" value="1"/>
</dbReference>
<dbReference type="SUPFAM" id="SSF53335">
    <property type="entry name" value="S-adenosyl-L-methionine-dependent methyltransferases"/>
    <property type="match status" value="1"/>
</dbReference>
<accession>B2TRH8</accession>
<keyword id="KW-0963">Cytoplasm</keyword>
<keyword id="KW-0489">Methyltransferase</keyword>
<keyword id="KW-0698">rRNA processing</keyword>
<keyword id="KW-0949">S-adenosyl-L-methionine</keyword>
<keyword id="KW-0808">Transferase</keyword>
<name>RSMG_CLOBB</name>
<feature type="chain" id="PRO_1000092622" description="Ribosomal RNA small subunit methyltransferase G">
    <location>
        <begin position="1"/>
        <end position="239"/>
    </location>
</feature>
<feature type="binding site" evidence="1">
    <location>
        <position position="78"/>
    </location>
    <ligand>
        <name>S-adenosyl-L-methionine</name>
        <dbReference type="ChEBI" id="CHEBI:59789"/>
    </ligand>
</feature>
<feature type="binding site" evidence="1">
    <location>
        <position position="83"/>
    </location>
    <ligand>
        <name>S-adenosyl-L-methionine</name>
        <dbReference type="ChEBI" id="CHEBI:59789"/>
    </ligand>
</feature>
<feature type="binding site" evidence="1">
    <location>
        <begin position="129"/>
        <end position="130"/>
    </location>
    <ligand>
        <name>S-adenosyl-L-methionine</name>
        <dbReference type="ChEBI" id="CHEBI:59789"/>
    </ligand>
</feature>
<feature type="binding site" evidence="1">
    <location>
        <position position="148"/>
    </location>
    <ligand>
        <name>S-adenosyl-L-methionine</name>
        <dbReference type="ChEBI" id="CHEBI:59789"/>
    </ligand>
</feature>
<evidence type="ECO:0000255" key="1">
    <source>
        <dbReference type="HAMAP-Rule" id="MF_00074"/>
    </source>
</evidence>
<sequence>MKFYDLMCKAAQDVGLELSKEQYEKFIIYKNLLQEWNEKVNLTAITEDEEIIKKHFIDSIKAFKRDEFKEAKTLIDVGTGAGFPGIPVAIMNENIQVTLLDSLNKRVNFLNLVTEKLGLKNVVAIHSRAEDGARQKNLRESFDIATSRAVANMSVLSEFCLPYVKINGHFIALKGPAVEEEIKDSDKAITTLGGQLLDICEVEIEDTELKHNLVVVKKIKECPKAYPRKAGNVTKKPIK</sequence>
<reference key="1">
    <citation type="submission" date="2008-04" db="EMBL/GenBank/DDBJ databases">
        <title>Complete sequence of Clostridium botulinum strain Eklund.</title>
        <authorList>
            <person name="Brinkac L.M."/>
            <person name="Brown J.L."/>
            <person name="Bruce D."/>
            <person name="Detter C."/>
            <person name="Munk C."/>
            <person name="Smith L.A."/>
            <person name="Smith T.J."/>
            <person name="Sutton G."/>
            <person name="Brettin T.S."/>
        </authorList>
    </citation>
    <scope>NUCLEOTIDE SEQUENCE [LARGE SCALE GENOMIC DNA]</scope>
    <source>
        <strain>Eklund 17B / Type B</strain>
    </source>
</reference>
<gene>
    <name evidence="1" type="primary">rsmG</name>
    <name type="ordered locus">CLL_A3598</name>
</gene>
<comment type="function">
    <text evidence="1">Specifically methylates the N7 position of a guanine in 16S rRNA.</text>
</comment>
<comment type="subcellular location">
    <subcellularLocation>
        <location evidence="1">Cytoplasm</location>
    </subcellularLocation>
</comment>
<comment type="similarity">
    <text evidence="1">Belongs to the methyltransferase superfamily. RNA methyltransferase RsmG family.</text>
</comment>
<protein>
    <recommendedName>
        <fullName evidence="1">Ribosomal RNA small subunit methyltransferase G</fullName>
        <ecNumber evidence="1">2.1.1.-</ecNumber>
    </recommendedName>
    <alternativeName>
        <fullName evidence="1">16S rRNA 7-methylguanosine methyltransferase</fullName>
        <shortName evidence="1">16S rRNA m7G methyltransferase</shortName>
    </alternativeName>
</protein>
<organism>
    <name type="scientific">Clostridium botulinum (strain Eklund 17B / Type B)</name>
    <dbReference type="NCBI Taxonomy" id="935198"/>
    <lineage>
        <taxon>Bacteria</taxon>
        <taxon>Bacillati</taxon>
        <taxon>Bacillota</taxon>
        <taxon>Clostridia</taxon>
        <taxon>Eubacteriales</taxon>
        <taxon>Clostridiaceae</taxon>
        <taxon>Clostridium</taxon>
    </lineage>
</organism>